<accession>P32383</accession>
<accession>D6W3A2</accession>
<comment type="function">
    <text evidence="7 8">The production of the second messenger molecules diacylglycerol (DAG) and inositol 1,4,5-trisphosphate (IP3) is mediated by activated phosphatidylinositol-specific phospholipase C enzymes. Required for cell growth, osmoresistance and expression of GPD1.</text>
</comment>
<comment type="catalytic activity">
    <reaction evidence="8">
        <text>a 1,2-diacyl-sn-glycero-3-phospho-(1D-myo-inositol-4,5-bisphosphate) + H2O = 1D-myo-inositol 1,4,5-trisphosphate + a 1,2-diacyl-sn-glycerol + H(+)</text>
        <dbReference type="Rhea" id="RHEA:33179"/>
        <dbReference type="ChEBI" id="CHEBI:15377"/>
        <dbReference type="ChEBI" id="CHEBI:15378"/>
        <dbReference type="ChEBI" id="CHEBI:17815"/>
        <dbReference type="ChEBI" id="CHEBI:58456"/>
        <dbReference type="ChEBI" id="CHEBI:203600"/>
        <dbReference type="EC" id="3.1.4.11"/>
    </reaction>
    <physiologicalReaction direction="left-to-right" evidence="8">
        <dbReference type="Rhea" id="RHEA:33180"/>
    </physiologicalReaction>
</comment>
<comment type="cofactor">
    <cofactor evidence="8">
        <name>Ca(2+)</name>
        <dbReference type="ChEBI" id="CHEBI:29108"/>
    </cofactor>
</comment>
<comment type="subunit">
    <text evidence="7">Interacts with SGD1.</text>
</comment>
<comment type="interaction">
    <interactant intactId="EBI-13485">
        <id>P32383</id>
    </interactant>
    <interactant intactId="EBI-34377">
        <id>Q06132</id>
        <label>SGD1</label>
    </interactant>
    <organismsDiffer>false</organismsDiffer>
    <experiments>3</experiments>
</comment>
<reference key="1">
    <citation type="journal article" date="1993" name="Proc. Natl. Acad. Sci. U.S.A.">
        <title>The putative phosphoinositide-specific phospholipase C gene, PLC1, of the yeast Saccharomyces cerevisiae is important for cell growth.</title>
        <authorList>
            <person name="Yoko-O T."/>
            <person name="Matsui Y."/>
            <person name="Yagisawa H."/>
            <person name="Nojima H."/>
            <person name="Uno I."/>
            <person name="Toh-e A."/>
        </authorList>
    </citation>
    <scope>NUCLEOTIDE SEQUENCE [GENOMIC DNA]</scope>
</reference>
<reference key="2">
    <citation type="journal article" date="1993" name="Mol. Cell. Biol.">
        <title>Genetic and biochemical characterization of a phosphatidylinositol-specific phospholipase C in Saccharomyces cerevisiae.</title>
        <authorList>
            <person name="Flick J.S."/>
            <person name="Thorner J.W."/>
        </authorList>
    </citation>
    <scope>NUCLEOTIDE SEQUENCE [GENOMIC DNA]</scope>
    <scope>FUNCTION</scope>
    <scope>CATALYTIC ACTIVITY</scope>
    <scope>COFACTOR</scope>
</reference>
<reference key="3">
    <citation type="journal article" date="1993" name="Mol. Cell. Biol.">
        <title>A mutation in PLC1, a candidate phosphoinositide-specific phospholipase C gene from Saccharomyces cerevisiae, causes aberrant mitotic chromosome segregation.</title>
        <authorList>
            <person name="Payne W.E."/>
            <person name="Fitzgerald-Hayes M."/>
        </authorList>
    </citation>
    <scope>NUCLEOTIDE SEQUENCE [GENOMIC DNA]</scope>
</reference>
<reference key="4">
    <citation type="journal article" date="1997" name="Nature">
        <title>The nucleotide sequence of Saccharomyces cerevisiae chromosome XVI.</title>
        <authorList>
            <person name="Bussey H."/>
            <person name="Storms R.K."/>
            <person name="Ahmed A."/>
            <person name="Albermann K."/>
            <person name="Allen E."/>
            <person name="Ansorge W."/>
            <person name="Araujo R."/>
            <person name="Aparicio A."/>
            <person name="Barrell B.G."/>
            <person name="Badcock K."/>
            <person name="Benes V."/>
            <person name="Botstein D."/>
            <person name="Bowman S."/>
            <person name="Brueckner M."/>
            <person name="Carpenter J."/>
            <person name="Cherry J.M."/>
            <person name="Chung E."/>
            <person name="Churcher C.M."/>
            <person name="Coster F."/>
            <person name="Davis K."/>
            <person name="Davis R.W."/>
            <person name="Dietrich F.S."/>
            <person name="Delius H."/>
            <person name="DiPaolo T."/>
            <person name="Dubois E."/>
            <person name="Duesterhoeft A."/>
            <person name="Duncan M."/>
            <person name="Floeth M."/>
            <person name="Fortin N."/>
            <person name="Friesen J.D."/>
            <person name="Fritz C."/>
            <person name="Goffeau A."/>
            <person name="Hall J."/>
            <person name="Hebling U."/>
            <person name="Heumann K."/>
            <person name="Hilbert H."/>
            <person name="Hillier L.W."/>
            <person name="Hunicke-Smith S."/>
            <person name="Hyman R.W."/>
            <person name="Johnston M."/>
            <person name="Kalman S."/>
            <person name="Kleine K."/>
            <person name="Komp C."/>
            <person name="Kurdi O."/>
            <person name="Lashkari D."/>
            <person name="Lew H."/>
            <person name="Lin A."/>
            <person name="Lin D."/>
            <person name="Louis E.J."/>
            <person name="Marathe R."/>
            <person name="Messenguy F."/>
            <person name="Mewes H.-W."/>
            <person name="Mirtipati S."/>
            <person name="Moestl D."/>
            <person name="Mueller-Auer S."/>
            <person name="Namath A."/>
            <person name="Nentwich U."/>
            <person name="Oefner P."/>
            <person name="Pearson D."/>
            <person name="Petel F.X."/>
            <person name="Pohl T.M."/>
            <person name="Purnelle B."/>
            <person name="Rajandream M.A."/>
            <person name="Rechmann S."/>
            <person name="Rieger M."/>
            <person name="Riles L."/>
            <person name="Roberts D."/>
            <person name="Schaefer M."/>
            <person name="Scharfe M."/>
            <person name="Scherens B."/>
            <person name="Schramm S."/>
            <person name="Schroeder M."/>
            <person name="Sdicu A.-M."/>
            <person name="Tettelin H."/>
            <person name="Urrestarazu L.A."/>
            <person name="Ushinsky S."/>
            <person name="Vierendeels F."/>
            <person name="Vissers S."/>
            <person name="Voss H."/>
            <person name="Walsh S.V."/>
            <person name="Wambutt R."/>
            <person name="Wang Y."/>
            <person name="Wedler E."/>
            <person name="Wedler H."/>
            <person name="Winnett E."/>
            <person name="Zhong W.-W."/>
            <person name="Zollner A."/>
            <person name="Vo D.H."/>
            <person name="Hani J."/>
        </authorList>
    </citation>
    <scope>NUCLEOTIDE SEQUENCE [LARGE SCALE GENOMIC DNA]</scope>
    <source>
        <strain>ATCC 204508 / S288c</strain>
    </source>
</reference>
<reference key="5">
    <citation type="journal article" date="2014" name="G3 (Bethesda)">
        <title>The reference genome sequence of Saccharomyces cerevisiae: Then and now.</title>
        <authorList>
            <person name="Engel S.R."/>
            <person name="Dietrich F.S."/>
            <person name="Fisk D.G."/>
            <person name="Binkley G."/>
            <person name="Balakrishnan R."/>
            <person name="Costanzo M.C."/>
            <person name="Dwight S.S."/>
            <person name="Hitz B.C."/>
            <person name="Karra K."/>
            <person name="Nash R.S."/>
            <person name="Weng S."/>
            <person name="Wong E.D."/>
            <person name="Lloyd P."/>
            <person name="Skrzypek M.S."/>
            <person name="Miyasato S.R."/>
            <person name="Simison M."/>
            <person name="Cherry J.M."/>
        </authorList>
    </citation>
    <scope>GENOME REANNOTATION</scope>
    <source>
        <strain>ATCC 204508 / S288c</strain>
    </source>
</reference>
<reference key="6">
    <citation type="journal article" date="2002" name="Mol. Genet. Genomics">
        <title>Phospholipase C interacts with Sgd1p and is required for expression of GPD1 and osmoresistance in Saccharomyces cerevisiae.</title>
        <authorList>
            <person name="Lin H."/>
            <person name="Nguyen P.H."/>
            <person name="Vancura A."/>
        </authorList>
    </citation>
    <scope>FUNCTION</scope>
    <scope>INTERACTION WITH SGD1</scope>
</reference>
<gene>
    <name type="primary">PLC1</name>
    <name type="ordered locus">YPL268W</name>
</gene>
<proteinExistence type="evidence at protein level"/>
<organism>
    <name type="scientific">Saccharomyces cerevisiae (strain ATCC 204508 / S288c)</name>
    <name type="common">Baker's yeast</name>
    <dbReference type="NCBI Taxonomy" id="559292"/>
    <lineage>
        <taxon>Eukaryota</taxon>
        <taxon>Fungi</taxon>
        <taxon>Dikarya</taxon>
        <taxon>Ascomycota</taxon>
        <taxon>Saccharomycotina</taxon>
        <taxon>Saccharomycetes</taxon>
        <taxon>Saccharomycetales</taxon>
        <taxon>Saccharomycetaceae</taxon>
        <taxon>Saccharomyces</taxon>
    </lineage>
</organism>
<name>PLC1_YEAST</name>
<dbReference type="EC" id="3.1.4.11" evidence="8"/>
<dbReference type="EMBL" id="D12738">
    <property type="protein sequence ID" value="BAA02230.1"/>
    <property type="molecule type" value="Genomic_DNA"/>
</dbReference>
<dbReference type="EMBL" id="L13036">
    <property type="protein sequence ID" value="AAA99927.1"/>
    <property type="molecule type" value="Genomic_DNA"/>
</dbReference>
<dbReference type="EMBL" id="S63468">
    <property type="protein sequence ID" value="AAB27349.2"/>
    <property type="molecule type" value="Genomic_DNA"/>
</dbReference>
<dbReference type="EMBL" id="Z73624">
    <property type="protein sequence ID" value="CAA98004.1"/>
    <property type="molecule type" value="Genomic_DNA"/>
</dbReference>
<dbReference type="EMBL" id="Z73623">
    <property type="protein sequence ID" value="CAA98003.1"/>
    <property type="molecule type" value="Genomic_DNA"/>
</dbReference>
<dbReference type="EMBL" id="BK006949">
    <property type="protein sequence ID" value="DAA11168.1"/>
    <property type="molecule type" value="Genomic_DNA"/>
</dbReference>
<dbReference type="PIR" id="A47257">
    <property type="entry name" value="A47257"/>
</dbReference>
<dbReference type="RefSeq" id="NP_015055.1">
    <property type="nucleotide sequence ID" value="NM_001184082.1"/>
</dbReference>
<dbReference type="SMR" id="P32383"/>
<dbReference type="BioGRID" id="35945">
    <property type="interactions" value="105"/>
</dbReference>
<dbReference type="FunCoup" id="P32383">
    <property type="interactions" value="447"/>
</dbReference>
<dbReference type="IntAct" id="P32383">
    <property type="interactions" value="6"/>
</dbReference>
<dbReference type="MINT" id="P32383"/>
<dbReference type="STRING" id="4932.YPL268W"/>
<dbReference type="SwissLipids" id="SLP:000000122"/>
<dbReference type="iPTMnet" id="P32383"/>
<dbReference type="PaxDb" id="4932-YPL268W"/>
<dbReference type="PeptideAtlas" id="P32383"/>
<dbReference type="EnsemblFungi" id="YPL268W_mRNA">
    <property type="protein sequence ID" value="YPL268W"/>
    <property type="gene ID" value="YPL268W"/>
</dbReference>
<dbReference type="GeneID" id="855860"/>
<dbReference type="KEGG" id="sce:YPL268W"/>
<dbReference type="AGR" id="SGD:S000006189"/>
<dbReference type="SGD" id="S000006189">
    <property type="gene designation" value="PLC1"/>
</dbReference>
<dbReference type="VEuPathDB" id="FungiDB:YPL268W"/>
<dbReference type="eggNOG" id="KOG0169">
    <property type="taxonomic scope" value="Eukaryota"/>
</dbReference>
<dbReference type="GeneTree" id="ENSGT00940000169016"/>
<dbReference type="HOGENOM" id="CLU_002738_1_2_1"/>
<dbReference type="InParanoid" id="P32383"/>
<dbReference type="OMA" id="HWQREMS"/>
<dbReference type="OrthoDB" id="269822at2759"/>
<dbReference type="BioCyc" id="YEAST:YPL268W-MONOMER"/>
<dbReference type="BRENDA" id="3.1.4.11">
    <property type="organism ID" value="984"/>
</dbReference>
<dbReference type="Reactome" id="R-SCE-112043">
    <property type="pathway name" value="PLC beta mediated events"/>
</dbReference>
<dbReference type="Reactome" id="R-SCE-114604">
    <property type="pathway name" value="GPVI-mediated activation cascade"/>
</dbReference>
<dbReference type="Reactome" id="R-SCE-1855204">
    <property type="pathway name" value="Synthesis of IP3 and IP4 in the cytosol"/>
</dbReference>
<dbReference type="Reactome" id="R-SCE-202433">
    <property type="pathway name" value="Generation of second messenger molecules"/>
</dbReference>
<dbReference type="Reactome" id="R-SCE-399997">
    <property type="pathway name" value="Acetylcholine regulates insulin secretion"/>
</dbReference>
<dbReference type="Reactome" id="R-SCE-416476">
    <property type="pathway name" value="G alpha (q) signalling events"/>
</dbReference>
<dbReference type="Reactome" id="R-SCE-434316">
    <property type="pathway name" value="Fatty Acids bound to GPR40 (FFAR1) regulate insulin secretion"/>
</dbReference>
<dbReference type="Reactome" id="R-SCE-5607764">
    <property type="pathway name" value="CLEC7A (Dectin-1) signaling"/>
</dbReference>
<dbReference type="Reactome" id="R-SCE-983695">
    <property type="pathway name" value="Antigen activates B Cell Receptor (BCR) leading to generation of second messengers"/>
</dbReference>
<dbReference type="BioGRID-ORCS" id="855860">
    <property type="hits" value="0 hits in 10 CRISPR screens"/>
</dbReference>
<dbReference type="PRO" id="PR:P32383"/>
<dbReference type="Proteomes" id="UP000002311">
    <property type="component" value="Chromosome XVI"/>
</dbReference>
<dbReference type="RNAct" id="P32383">
    <property type="molecule type" value="protein"/>
</dbReference>
<dbReference type="GO" id="GO:0000775">
    <property type="term" value="C:chromosome, centromeric region"/>
    <property type="evidence" value="ECO:0000314"/>
    <property type="project" value="SGD"/>
</dbReference>
<dbReference type="GO" id="GO:0000776">
    <property type="term" value="C:kinetochore"/>
    <property type="evidence" value="ECO:0000353"/>
    <property type="project" value="SGD"/>
</dbReference>
<dbReference type="GO" id="GO:0005509">
    <property type="term" value="F:calcium ion binding"/>
    <property type="evidence" value="ECO:0007669"/>
    <property type="project" value="InterPro"/>
</dbReference>
<dbReference type="GO" id="GO:0004435">
    <property type="term" value="F:phosphatidylinositol-4,5-bisphosphate phospholipase C activity"/>
    <property type="evidence" value="ECO:0000314"/>
    <property type="project" value="SGD"/>
</dbReference>
<dbReference type="GO" id="GO:0032958">
    <property type="term" value="P:inositol phosphate biosynthetic process"/>
    <property type="evidence" value="ECO:0000315"/>
    <property type="project" value="SGD"/>
</dbReference>
<dbReference type="GO" id="GO:0048015">
    <property type="term" value="P:phosphatidylinositol-mediated signaling"/>
    <property type="evidence" value="ECO:0000318"/>
    <property type="project" value="GO_Central"/>
</dbReference>
<dbReference type="GO" id="GO:0009395">
    <property type="term" value="P:phospholipid catabolic process"/>
    <property type="evidence" value="ECO:0000314"/>
    <property type="project" value="SGD"/>
</dbReference>
<dbReference type="GO" id="GO:0034501">
    <property type="term" value="P:protein localization to kinetochore"/>
    <property type="evidence" value="ECO:0000315"/>
    <property type="project" value="SGD"/>
</dbReference>
<dbReference type="GO" id="GO:0001402">
    <property type="term" value="P:signal transduction involved in filamentous growth"/>
    <property type="evidence" value="ECO:0000316"/>
    <property type="project" value="SGD"/>
</dbReference>
<dbReference type="CDD" id="cd00275">
    <property type="entry name" value="C2_PLC_like"/>
    <property type="match status" value="1"/>
</dbReference>
<dbReference type="CDD" id="cd16207">
    <property type="entry name" value="EFh_ScPlc1p_like"/>
    <property type="match status" value="1"/>
</dbReference>
<dbReference type="CDD" id="cd13360">
    <property type="entry name" value="PH_PLC_fungal"/>
    <property type="match status" value="1"/>
</dbReference>
<dbReference type="CDD" id="cd08598">
    <property type="entry name" value="PI-PLC1c_yeast"/>
    <property type="match status" value="1"/>
</dbReference>
<dbReference type="FunFam" id="2.60.40.150:FF:000291">
    <property type="entry name" value="Phosphoinositide phospholipase C"/>
    <property type="match status" value="1"/>
</dbReference>
<dbReference type="FunFam" id="3.20.20.190:FF:000055">
    <property type="entry name" value="Phosphoinositide phospholipase C"/>
    <property type="match status" value="1"/>
</dbReference>
<dbReference type="Gene3D" id="2.60.40.150">
    <property type="entry name" value="C2 domain"/>
    <property type="match status" value="1"/>
</dbReference>
<dbReference type="Gene3D" id="1.10.238.10">
    <property type="entry name" value="EF-hand"/>
    <property type="match status" value="1"/>
</dbReference>
<dbReference type="Gene3D" id="3.20.20.190">
    <property type="entry name" value="Phosphatidylinositol (PI) phosphodiesterase"/>
    <property type="match status" value="1"/>
</dbReference>
<dbReference type="Gene3D" id="2.30.29.30">
    <property type="entry name" value="Pleckstrin-homology domain (PH domain)/Phosphotyrosine-binding domain (PTB)"/>
    <property type="match status" value="1"/>
</dbReference>
<dbReference type="InterPro" id="IPR000008">
    <property type="entry name" value="C2_dom"/>
</dbReference>
<dbReference type="InterPro" id="IPR035892">
    <property type="entry name" value="C2_domain_sf"/>
</dbReference>
<dbReference type="InterPro" id="IPR011992">
    <property type="entry name" value="EF-hand-dom_pair"/>
</dbReference>
<dbReference type="InterPro" id="IPR018247">
    <property type="entry name" value="EF_Hand_1_Ca_BS"/>
</dbReference>
<dbReference type="InterPro" id="IPR002048">
    <property type="entry name" value="EF_hand_dom"/>
</dbReference>
<dbReference type="InterPro" id="IPR011993">
    <property type="entry name" value="PH-like_dom_sf"/>
</dbReference>
<dbReference type="InterPro" id="IPR001192">
    <property type="entry name" value="PI-PLC_fam"/>
</dbReference>
<dbReference type="InterPro" id="IPR017946">
    <property type="entry name" value="PLC-like_Pdiesterase_TIM-brl"/>
</dbReference>
<dbReference type="InterPro" id="IPR037755">
    <property type="entry name" value="Plc1_PH"/>
</dbReference>
<dbReference type="InterPro" id="IPR015359">
    <property type="entry name" value="PLC_EF-hand-like"/>
</dbReference>
<dbReference type="InterPro" id="IPR000909">
    <property type="entry name" value="PLipase_C_PInositol-sp_X_dom"/>
</dbReference>
<dbReference type="InterPro" id="IPR001711">
    <property type="entry name" value="PLipase_C_Pinositol-sp_Y"/>
</dbReference>
<dbReference type="PANTHER" id="PTHR10336:SF36">
    <property type="entry name" value="1-PHOSPHATIDYLINOSITOL 4,5-BISPHOSPHATE PHOSPHODIESTERASE BETA-4"/>
    <property type="match status" value="1"/>
</dbReference>
<dbReference type="PANTHER" id="PTHR10336">
    <property type="entry name" value="PHOSPHOINOSITIDE-SPECIFIC PHOSPHOLIPASE C FAMILY PROTEIN"/>
    <property type="match status" value="1"/>
</dbReference>
<dbReference type="Pfam" id="PF09279">
    <property type="entry name" value="EF-hand_like"/>
    <property type="match status" value="1"/>
</dbReference>
<dbReference type="Pfam" id="PF00388">
    <property type="entry name" value="PI-PLC-X"/>
    <property type="match status" value="1"/>
</dbReference>
<dbReference type="Pfam" id="PF00387">
    <property type="entry name" value="PI-PLC-Y"/>
    <property type="match status" value="1"/>
</dbReference>
<dbReference type="PRINTS" id="PR00390">
    <property type="entry name" value="PHPHLIPASEC"/>
</dbReference>
<dbReference type="SMART" id="SM00239">
    <property type="entry name" value="C2"/>
    <property type="match status" value="1"/>
</dbReference>
<dbReference type="SMART" id="SM00148">
    <property type="entry name" value="PLCXc"/>
    <property type="match status" value="1"/>
</dbReference>
<dbReference type="SMART" id="SM00149">
    <property type="entry name" value="PLCYc"/>
    <property type="match status" value="1"/>
</dbReference>
<dbReference type="SUPFAM" id="SSF49562">
    <property type="entry name" value="C2 domain (Calcium/lipid-binding domain, CaLB)"/>
    <property type="match status" value="1"/>
</dbReference>
<dbReference type="SUPFAM" id="SSF47473">
    <property type="entry name" value="EF-hand"/>
    <property type="match status" value="1"/>
</dbReference>
<dbReference type="SUPFAM" id="SSF50729">
    <property type="entry name" value="PH domain-like"/>
    <property type="match status" value="1"/>
</dbReference>
<dbReference type="SUPFAM" id="SSF51695">
    <property type="entry name" value="PLC-like phosphodiesterases"/>
    <property type="match status" value="1"/>
</dbReference>
<dbReference type="PROSITE" id="PS50004">
    <property type="entry name" value="C2"/>
    <property type="match status" value="1"/>
</dbReference>
<dbReference type="PROSITE" id="PS00018">
    <property type="entry name" value="EF_HAND_1"/>
    <property type="match status" value="1"/>
</dbReference>
<dbReference type="PROSITE" id="PS50222">
    <property type="entry name" value="EF_HAND_2"/>
    <property type="match status" value="1"/>
</dbReference>
<dbReference type="PROSITE" id="PS50007">
    <property type="entry name" value="PIPLC_X_DOMAIN"/>
    <property type="match status" value="1"/>
</dbReference>
<dbReference type="PROSITE" id="PS50008">
    <property type="entry name" value="PIPLC_Y_DOMAIN"/>
    <property type="match status" value="1"/>
</dbReference>
<feature type="chain" id="PRO_0000088514" description="1-phosphatidylinositol 4,5-bisphosphate phosphodiesterase 1">
    <location>
        <begin position="1"/>
        <end position="869"/>
    </location>
</feature>
<feature type="domain" description="EF-hand" evidence="5">
    <location>
        <begin position="269"/>
        <end position="304"/>
    </location>
</feature>
<feature type="domain" description="PI-PLC X-box" evidence="3">
    <location>
        <begin position="382"/>
        <end position="520"/>
    </location>
</feature>
<feature type="domain" description="PI-PLC Y-box" evidence="4">
    <location>
        <begin position="590"/>
        <end position="709"/>
    </location>
</feature>
<feature type="domain" description="C2" evidence="2">
    <location>
        <begin position="713"/>
        <end position="862"/>
    </location>
</feature>
<feature type="region of interest" description="Disordered" evidence="6">
    <location>
        <begin position="546"/>
        <end position="571"/>
    </location>
</feature>
<feature type="compositionally biased region" description="Low complexity" evidence="6">
    <location>
        <begin position="558"/>
        <end position="568"/>
    </location>
</feature>
<feature type="active site" evidence="3">
    <location>
        <position position="395"/>
    </location>
</feature>
<feature type="active site" evidence="3">
    <location>
        <position position="439"/>
    </location>
</feature>
<feature type="binding site" evidence="5">
    <location>
        <position position="282"/>
    </location>
    <ligand>
        <name>Ca(2+)</name>
        <dbReference type="ChEBI" id="CHEBI:29108"/>
    </ligand>
</feature>
<feature type="binding site" evidence="5">
    <location>
        <position position="284"/>
    </location>
    <ligand>
        <name>Ca(2+)</name>
        <dbReference type="ChEBI" id="CHEBI:29108"/>
    </ligand>
</feature>
<feature type="binding site" evidence="5">
    <location>
        <position position="286"/>
    </location>
    <ligand>
        <name>Ca(2+)</name>
        <dbReference type="ChEBI" id="CHEBI:29108"/>
    </ligand>
</feature>
<feature type="binding site" evidence="5">
    <location>
        <position position="293"/>
    </location>
    <ligand>
        <name>Ca(2+)</name>
        <dbReference type="ChEBI" id="CHEBI:29108"/>
    </ligand>
</feature>
<feature type="binding site" evidence="1">
    <location>
        <position position="518"/>
    </location>
    <ligand>
        <name>substrate</name>
    </ligand>
</feature>
<feature type="binding site" evidence="1">
    <location>
        <position position="520"/>
    </location>
    <ligand>
        <name>substrate</name>
    </ligand>
</feature>
<feature type="binding site" evidence="1">
    <location>
        <position position="614"/>
    </location>
    <ligand>
        <name>substrate</name>
    </ligand>
</feature>
<feature type="binding site" evidence="1">
    <location>
        <position position="643"/>
    </location>
    <ligand>
        <name>substrate</name>
    </ligand>
</feature>
<feature type="sequence conflict" description="In Ref. 2; AAA99927." evidence="9" ref="2">
    <original>T</original>
    <variation>M</variation>
    <location>
        <position position="159"/>
    </location>
</feature>
<feature type="sequence conflict" description="In Ref. 2; AAA99927." evidence="9" ref="2">
    <original>A</original>
    <variation>T</variation>
    <location>
        <position position="181"/>
    </location>
</feature>
<feature type="sequence conflict" description="In Ref. 2; AAA99927." evidence="9" ref="2">
    <original>A</original>
    <variation>V</variation>
    <location>
        <position position="581"/>
    </location>
</feature>
<evidence type="ECO:0000250" key="1"/>
<evidence type="ECO:0000255" key="2">
    <source>
        <dbReference type="PROSITE-ProRule" id="PRU00041"/>
    </source>
</evidence>
<evidence type="ECO:0000255" key="3">
    <source>
        <dbReference type="PROSITE-ProRule" id="PRU00270"/>
    </source>
</evidence>
<evidence type="ECO:0000255" key="4">
    <source>
        <dbReference type="PROSITE-ProRule" id="PRU00271"/>
    </source>
</evidence>
<evidence type="ECO:0000255" key="5">
    <source>
        <dbReference type="PROSITE-ProRule" id="PRU00448"/>
    </source>
</evidence>
<evidence type="ECO:0000256" key="6">
    <source>
        <dbReference type="SAM" id="MobiDB-lite"/>
    </source>
</evidence>
<evidence type="ECO:0000269" key="7">
    <source>
    </source>
</evidence>
<evidence type="ECO:0000269" key="8">
    <source>
    </source>
</evidence>
<evidence type="ECO:0000305" key="9"/>
<protein>
    <recommendedName>
        <fullName>1-phosphatidylinositol 4,5-bisphosphate phosphodiesterase 1</fullName>
        <ecNumber evidence="8">3.1.4.11</ecNumber>
    </recommendedName>
    <alternativeName>
        <fullName>Phosphoinositide phospholipase C</fullName>
    </alternativeName>
    <alternativeName>
        <fullName>Phospholipase C-1</fullName>
        <shortName>PLC-1</shortName>
    </alternativeName>
</protein>
<sequence length="869" mass="100548">MTESAIDDQRFNLTKELQRHSCRDQGKITQKDDALDFISYSSFQSSFNTDQKSANNGSTVRRSIRSIFRRAAELPRVHMGPLTYSHGINELVNKKLRKDCDLSTLCRVLQRGIRMIRMTRRRRKFYEFKLINNNGQIIWKDGSKYLELDSVKDIRIGDTASTYQEEVDPKRLRSDSKLWIAIIYKVSNKLKALHVVALNELDFNTFLSCICGLVKLRRELMESILLPDNSQFARIHWQITVSEKEEDEKKDTLSFADVKKLCDKFHIYVSTGQLLEFFQLADINHNGLLNYFEFEKFIKILKNRKEVNMIWSKFTKPPHSHLSFENFFQFLITEQHEQVDRQTAWSYFIKYREPTQLTMGQDGFTKFLKEQPYLVEVKEELYSKPLNHYFIASSHNTYLLGKQIAETPSVEGYIQVLQQGCRCVEIDIWDGENGPVVCHGFLTSAIPLKTVIRVIKKYAFITSPYPLIISLEINCNKDNQKLASLIMREVLAEQLYFVGTRTDKLPSPRELKHKILLKSKKTSEATRGLSVNEPFPSSFSSSYESANEQELRMKDDSTNSSSATNSSSMQRIKRIGLKKHADIINDVSNISGIHGIKFRNFSLPESKTIAHCFSLNERKVEYMIKDKHLKLSLDKHNRRYLMRVYPHVLRYKSSNFNPIPFWKAGVQMVATNWQTNDIGQQLNLAMFQILDHQPDGSFKSGYVLKPKKLLPVVTKAKMIPLIYEHFENGSDPVTVKIRILSTQLLPRLNDTSPSRNNTNSFVKVEFHTDDEPTMPISIDKGTRISATEASTKSSQGNGFNPIWDAEVSITLKDTDLTFIKFMVISEETQIASVCLKLNYLRMGYRHIPLFNMEGEQYIFCTLFIHTQIL</sequence>
<keyword id="KW-0106">Calcium</keyword>
<keyword id="KW-0378">Hydrolase</keyword>
<keyword id="KW-0442">Lipid degradation</keyword>
<keyword id="KW-0443">Lipid metabolism</keyword>
<keyword id="KW-0479">Metal-binding</keyword>
<keyword id="KW-1185">Reference proteome</keyword>
<keyword id="KW-0807">Transducer</keyword>